<name>SNMP1_DROWI</name>
<evidence type="ECO:0000250" key="1">
    <source>
        <dbReference type="UniProtKB" id="O02351"/>
    </source>
</evidence>
<evidence type="ECO:0000250" key="2">
    <source>
        <dbReference type="UniProtKB" id="P26201"/>
    </source>
</evidence>
<evidence type="ECO:0000250" key="3">
    <source>
        <dbReference type="UniProtKB" id="Q9VDD3"/>
    </source>
</evidence>
<evidence type="ECO:0000255" key="4"/>
<evidence type="ECO:0000256" key="5">
    <source>
        <dbReference type="SAM" id="MobiDB-lite"/>
    </source>
</evidence>
<evidence type="ECO:0000305" key="6"/>
<evidence type="ECO:0000312" key="7">
    <source>
        <dbReference type="EMBL" id="EDW85130.1"/>
    </source>
</evidence>
<feature type="chain" id="PRO_0000408246" description="Sensory neuron membrane protein 1">
    <location>
        <begin position="1"/>
        <end position="536"/>
    </location>
</feature>
<feature type="topological domain" description="Cytoplasmic" evidence="4">
    <location>
        <begin position="1"/>
        <end position="7"/>
    </location>
</feature>
<feature type="transmembrane region" description="Helical" evidence="4">
    <location>
        <begin position="8"/>
        <end position="28"/>
    </location>
</feature>
<feature type="topological domain" description="Extracellular" evidence="4">
    <location>
        <begin position="29"/>
        <end position="459"/>
    </location>
</feature>
<feature type="transmembrane region" description="Helical" evidence="4">
    <location>
        <begin position="460"/>
        <end position="480"/>
    </location>
</feature>
<feature type="topological domain" description="Cytoplasmic" evidence="4">
    <location>
        <begin position="481"/>
        <end position="536"/>
    </location>
</feature>
<feature type="region of interest" description="Disordered" evidence="5">
    <location>
        <begin position="507"/>
        <end position="536"/>
    </location>
</feature>
<feature type="compositionally biased region" description="Polar residues" evidence="5">
    <location>
        <begin position="514"/>
        <end position="529"/>
    </location>
</feature>
<feature type="glycosylation site" description="N-linked (GlcNAc...) asparagine" evidence="4">
    <location>
        <position position="66"/>
    </location>
</feature>
<feature type="glycosylation site" description="N-linked (GlcNAc...) asparagine" evidence="4">
    <location>
        <position position="213"/>
    </location>
</feature>
<feature type="glycosylation site" description="N-linked (GlcNAc...) asparagine" evidence="4">
    <location>
        <position position="226"/>
    </location>
</feature>
<feature type="glycosylation site" description="N-linked (GlcNAc...) asparagine" evidence="4">
    <location>
        <position position="440"/>
    </location>
</feature>
<feature type="disulfide bond" evidence="2">
    <location>
        <begin position="265"/>
        <end position="330"/>
    </location>
</feature>
<feature type="disulfide bond" evidence="2">
    <location>
        <begin position="294"/>
        <end position="352"/>
    </location>
</feature>
<feature type="disulfide bond" evidence="2">
    <location>
        <begin position="332"/>
        <end position="341"/>
    </location>
</feature>
<comment type="function">
    <text evidence="3">Plays an olfactory role that is not restricted to pheromone sensitivity.</text>
</comment>
<comment type="subcellular location">
    <subcellularLocation>
        <location evidence="1">Cell membrane</location>
        <topology evidence="1">Multi-pass membrane protein</topology>
    </subcellularLocation>
</comment>
<comment type="similarity">
    <text evidence="6">Belongs to the CD36 family.</text>
</comment>
<reference evidence="7" key="1">
    <citation type="journal article" date="2007" name="Nature">
        <title>Evolution of genes and genomes on the Drosophila phylogeny.</title>
        <authorList>
            <consortium name="Drosophila 12 genomes consortium"/>
        </authorList>
    </citation>
    <scope>NUCLEOTIDE SEQUENCE [LARGE SCALE GENOMIC DNA]</scope>
    <source>
        <strain evidence="7">Tucson 14030-0811.24</strain>
    </source>
</reference>
<protein>
    <recommendedName>
        <fullName evidence="3">Sensory neuron membrane protein 1</fullName>
    </recommendedName>
</protein>
<gene>
    <name evidence="3" type="primary">Snmp1</name>
    <name type="ORF">GK12776</name>
</gene>
<sequence>MQVHRMKLLMGSGGGLLFGIIFGWVIFPKILKFMISKQVTLKPGTDIRDLWSATPFPLHFYIYVFNVTNPDDVARGARPQLQEIGPFVFDEWKDKFDLIDDVVEDTVSYNMRNTFIFNEEASSPLTGEEIITLPHPLMQPIGITVQRERAAMMELISKALTLVFPDATAFYSGKFMDIFFRGLDVDCSSEEFAAKALCTVFYTGEVKQAKQMNQTHFLFSFMGQANHSDAGRFTVCRGVKNNMKLGKVVKFADEPELDAWPGDECNQFVGTDSTVFPPGLKREAGLWAFTPDICRSLGAMYQRKSSYHGMPAVRYNLDLGDVRSDEKLHCFCDDPEDLDTCPPRGTMNLAPCVGGPLIASLPHFYKADPKLVAAVDGLNPNEKDHAVYIDFELMSGTPFQAAKRLQFSLDMEPVEGIEPMQKLPKLILPLFWVEEGVHLNKTYTNMVKYTLFLGLKFNSGLRWTIITMSLVGLMSTAYLFYQQYDSLDITMPPKIIKESNKVADEVESSKSKTIEQNSSITTSLPGANQSHHKDRY</sequence>
<dbReference type="EMBL" id="CH964272">
    <property type="protein sequence ID" value="EDW85130.1"/>
    <property type="molecule type" value="Genomic_DNA"/>
</dbReference>
<dbReference type="SMR" id="B4NK88"/>
<dbReference type="STRING" id="7260.B4NK88"/>
<dbReference type="GlyCosmos" id="B4NK88">
    <property type="glycosylation" value="4 sites, No reported glycans"/>
</dbReference>
<dbReference type="EnsemblMetazoa" id="FBtr0243427">
    <property type="protein sequence ID" value="FBpp0241919"/>
    <property type="gene ID" value="FBgn0214785"/>
</dbReference>
<dbReference type="EnsemblMetazoa" id="XM_002074108.4">
    <property type="protein sequence ID" value="XP_002074144.1"/>
    <property type="gene ID" value="LOC6650925"/>
</dbReference>
<dbReference type="GeneID" id="6650925"/>
<dbReference type="KEGG" id="dwi:6650925"/>
<dbReference type="CTD" id="42514"/>
<dbReference type="eggNOG" id="KOG3776">
    <property type="taxonomic scope" value="Eukaryota"/>
</dbReference>
<dbReference type="HOGENOM" id="CLU_019853_1_2_1"/>
<dbReference type="OMA" id="QRKSSYH"/>
<dbReference type="OrthoDB" id="10024078at2759"/>
<dbReference type="PhylomeDB" id="B4NK88"/>
<dbReference type="ChiTaRS" id="Snmp1">
    <property type="organism name" value="fly"/>
</dbReference>
<dbReference type="Proteomes" id="UP000007798">
    <property type="component" value="Unassembled WGS sequence"/>
</dbReference>
<dbReference type="GO" id="GO:0005929">
    <property type="term" value="C:cilium"/>
    <property type="evidence" value="ECO:0007669"/>
    <property type="project" value="EnsemblMetazoa"/>
</dbReference>
<dbReference type="GO" id="GO:0005737">
    <property type="term" value="C:cytoplasm"/>
    <property type="evidence" value="ECO:0007669"/>
    <property type="project" value="TreeGrafter"/>
</dbReference>
<dbReference type="GO" id="GO:0030425">
    <property type="term" value="C:dendrite"/>
    <property type="evidence" value="ECO:0007669"/>
    <property type="project" value="EnsemblMetazoa"/>
</dbReference>
<dbReference type="GO" id="GO:0043025">
    <property type="term" value="C:neuronal cell body"/>
    <property type="evidence" value="ECO:0007669"/>
    <property type="project" value="EnsemblMetazoa"/>
</dbReference>
<dbReference type="GO" id="GO:0005886">
    <property type="term" value="C:plasma membrane"/>
    <property type="evidence" value="ECO:0007669"/>
    <property type="project" value="UniProtKB-SubCell"/>
</dbReference>
<dbReference type="GO" id="GO:0005044">
    <property type="term" value="F:scavenger receptor activity"/>
    <property type="evidence" value="ECO:0007669"/>
    <property type="project" value="TreeGrafter"/>
</dbReference>
<dbReference type="GO" id="GO:0007166">
    <property type="term" value="P:cell surface receptor signaling pathway"/>
    <property type="evidence" value="ECO:0007669"/>
    <property type="project" value="EnsemblMetazoa"/>
</dbReference>
<dbReference type="GO" id="GO:0071444">
    <property type="term" value="P:cellular response to pheromone"/>
    <property type="evidence" value="ECO:0007669"/>
    <property type="project" value="EnsemblMetazoa"/>
</dbReference>
<dbReference type="GO" id="GO:0050911">
    <property type="term" value="P:detection of chemical stimulus involved in sensory perception of smell"/>
    <property type="evidence" value="ECO:0007669"/>
    <property type="project" value="EnsemblMetazoa"/>
</dbReference>
<dbReference type="GO" id="GO:0055088">
    <property type="term" value="P:lipid homeostasis"/>
    <property type="evidence" value="ECO:0007669"/>
    <property type="project" value="EnsemblMetazoa"/>
</dbReference>
<dbReference type="GO" id="GO:0035073">
    <property type="term" value="P:pupariation"/>
    <property type="evidence" value="ECO:0007669"/>
    <property type="project" value="EnsemblMetazoa"/>
</dbReference>
<dbReference type="InterPro" id="IPR002159">
    <property type="entry name" value="CD36_fam"/>
</dbReference>
<dbReference type="PANTHER" id="PTHR11923">
    <property type="entry name" value="SCAVENGER RECEPTOR CLASS B TYPE-1 SR-B1"/>
    <property type="match status" value="1"/>
</dbReference>
<dbReference type="PANTHER" id="PTHR11923:SF69">
    <property type="entry name" value="SENSORY NEURON MEMBRANE PROTEIN 1"/>
    <property type="match status" value="1"/>
</dbReference>
<dbReference type="Pfam" id="PF01130">
    <property type="entry name" value="CD36"/>
    <property type="match status" value="1"/>
</dbReference>
<dbReference type="PRINTS" id="PR01609">
    <property type="entry name" value="CD36FAMILY"/>
</dbReference>
<proteinExistence type="inferred from homology"/>
<organism>
    <name type="scientific">Drosophila willistoni</name>
    <name type="common">Fruit fly</name>
    <dbReference type="NCBI Taxonomy" id="7260"/>
    <lineage>
        <taxon>Eukaryota</taxon>
        <taxon>Metazoa</taxon>
        <taxon>Ecdysozoa</taxon>
        <taxon>Arthropoda</taxon>
        <taxon>Hexapoda</taxon>
        <taxon>Insecta</taxon>
        <taxon>Pterygota</taxon>
        <taxon>Neoptera</taxon>
        <taxon>Endopterygota</taxon>
        <taxon>Diptera</taxon>
        <taxon>Brachycera</taxon>
        <taxon>Muscomorpha</taxon>
        <taxon>Ephydroidea</taxon>
        <taxon>Drosophilidae</taxon>
        <taxon>Drosophila</taxon>
        <taxon>Sophophora</taxon>
    </lineage>
</organism>
<keyword id="KW-1003">Cell membrane</keyword>
<keyword id="KW-1015">Disulfide bond</keyword>
<keyword id="KW-0325">Glycoprotein</keyword>
<keyword id="KW-0472">Membrane</keyword>
<keyword id="KW-0552">Olfaction</keyword>
<keyword id="KW-0675">Receptor</keyword>
<keyword id="KW-1185">Reference proteome</keyword>
<keyword id="KW-0716">Sensory transduction</keyword>
<keyword id="KW-0812">Transmembrane</keyword>
<keyword id="KW-1133">Transmembrane helix</keyword>
<accession>B4NK88</accession>